<sequence length="586" mass="66833">MKENETLKQIVLKSLEEGVDSLIVSFPDVEKSSLRIKIEYSRDEKFGDYSTSFSLENSKLLKRNPIQVSKELVEILQKRTDLFEKVDFTPPGFVNFKISPSYLLEYIEKSILSGDHFPKVEHPLKINLEFVSANPTGPLNIVSARAAANGDTMASLLKAIGHNVDKEFYINDYGNQVFLLGVSTLVRIREIKGEFSTRQEADDTTPIDTILEKNILPAEGYRGEYIKDIANALLNEPKKSSQIETLLKEKKYRELAELCSIWTVENNLDWQRKDLDSFGVEFDNYFRERTLHESDKVLAVMKDLERVGKIFEEDGKKIFRSTEYGDDKDRVVVRDDGRPTYLLADIAYHKDKIERGYDRIYDIWGPDHHGYISRLSGAVQTLGYKKENFKVIISQQVNLLESGQKVKMSKRAGSFQTMSDLIGFLGKHGKDVGRYFFVMRSLDAPLDFDLDLAQDQSDKNPVFYLQYAHARICSIFREVGTESSAEAAESLEMSEERKRLLFWIARFPEEIFDSANSMEPHRVANYLQSFAKAFTGFYLGKNNRLKDATPEVRLGLARICLAARSVLAEGLGLIGVSAPEKMEKES</sequence>
<feature type="chain" id="PRO_1000198917" description="Arginine--tRNA ligase">
    <location>
        <begin position="1"/>
        <end position="586"/>
    </location>
</feature>
<feature type="short sequence motif" description="'HIGH' region">
    <location>
        <begin position="133"/>
        <end position="143"/>
    </location>
</feature>
<proteinExistence type="inferred from homology"/>
<protein>
    <recommendedName>
        <fullName evidence="1">Arginine--tRNA ligase</fullName>
        <ecNumber evidence="1">6.1.1.19</ecNumber>
    </recommendedName>
    <alternativeName>
        <fullName evidence="1">Arginyl-tRNA synthetase</fullName>
        <shortName evidence="1">ArgRS</shortName>
    </alternativeName>
</protein>
<keyword id="KW-0030">Aminoacyl-tRNA synthetase</keyword>
<keyword id="KW-0067">ATP-binding</keyword>
<keyword id="KW-0963">Cytoplasm</keyword>
<keyword id="KW-0436">Ligase</keyword>
<keyword id="KW-0547">Nucleotide-binding</keyword>
<keyword id="KW-0648">Protein biosynthesis</keyword>
<accession>Q052J1</accession>
<organism>
    <name type="scientific">Leptospira borgpetersenii serovar Hardjo-bovis (strain L550)</name>
    <dbReference type="NCBI Taxonomy" id="355276"/>
    <lineage>
        <taxon>Bacteria</taxon>
        <taxon>Pseudomonadati</taxon>
        <taxon>Spirochaetota</taxon>
        <taxon>Spirochaetia</taxon>
        <taxon>Leptospirales</taxon>
        <taxon>Leptospiraceae</taxon>
        <taxon>Leptospira</taxon>
    </lineage>
</organism>
<evidence type="ECO:0000255" key="1">
    <source>
        <dbReference type="HAMAP-Rule" id="MF_00123"/>
    </source>
</evidence>
<name>SYR_LEPBL</name>
<comment type="catalytic activity">
    <reaction evidence="1">
        <text>tRNA(Arg) + L-arginine + ATP = L-arginyl-tRNA(Arg) + AMP + diphosphate</text>
        <dbReference type="Rhea" id="RHEA:20301"/>
        <dbReference type="Rhea" id="RHEA-COMP:9658"/>
        <dbReference type="Rhea" id="RHEA-COMP:9673"/>
        <dbReference type="ChEBI" id="CHEBI:30616"/>
        <dbReference type="ChEBI" id="CHEBI:32682"/>
        <dbReference type="ChEBI" id="CHEBI:33019"/>
        <dbReference type="ChEBI" id="CHEBI:78442"/>
        <dbReference type="ChEBI" id="CHEBI:78513"/>
        <dbReference type="ChEBI" id="CHEBI:456215"/>
        <dbReference type="EC" id="6.1.1.19"/>
    </reaction>
</comment>
<comment type="subunit">
    <text evidence="1">Monomer.</text>
</comment>
<comment type="subcellular location">
    <subcellularLocation>
        <location evidence="1">Cytoplasm</location>
    </subcellularLocation>
</comment>
<comment type="similarity">
    <text evidence="1">Belongs to the class-I aminoacyl-tRNA synthetase family.</text>
</comment>
<reference key="1">
    <citation type="journal article" date="2006" name="Proc. Natl. Acad. Sci. U.S.A.">
        <title>Genome reduction in Leptospira borgpetersenii reflects limited transmission potential.</title>
        <authorList>
            <person name="Bulach D.M."/>
            <person name="Zuerner R.L."/>
            <person name="Wilson P."/>
            <person name="Seemann T."/>
            <person name="McGrath A."/>
            <person name="Cullen P.A."/>
            <person name="Davis J."/>
            <person name="Johnson M."/>
            <person name="Kuczek E."/>
            <person name="Alt D.P."/>
            <person name="Peterson-Burch B."/>
            <person name="Coppel R.L."/>
            <person name="Rood J.I."/>
            <person name="Davies J.K."/>
            <person name="Adler B."/>
        </authorList>
    </citation>
    <scope>NUCLEOTIDE SEQUENCE [LARGE SCALE GENOMIC DNA]</scope>
    <source>
        <strain>L550</strain>
    </source>
</reference>
<gene>
    <name evidence="1" type="primary">argS</name>
    <name type="ordered locus">LBL_1256</name>
</gene>
<dbReference type="EC" id="6.1.1.19" evidence="1"/>
<dbReference type="EMBL" id="CP000348">
    <property type="protein sequence ID" value="ABJ78754.1"/>
    <property type="molecule type" value="Genomic_DNA"/>
</dbReference>
<dbReference type="RefSeq" id="WP_011669987.1">
    <property type="nucleotide sequence ID" value="NC_008508.1"/>
</dbReference>
<dbReference type="SMR" id="Q052J1"/>
<dbReference type="KEGG" id="lbl:LBL_1256"/>
<dbReference type="HOGENOM" id="CLU_006406_0_1_12"/>
<dbReference type="GO" id="GO:0005737">
    <property type="term" value="C:cytoplasm"/>
    <property type="evidence" value="ECO:0007669"/>
    <property type="project" value="UniProtKB-SubCell"/>
</dbReference>
<dbReference type="GO" id="GO:0004814">
    <property type="term" value="F:arginine-tRNA ligase activity"/>
    <property type="evidence" value="ECO:0007669"/>
    <property type="project" value="UniProtKB-UniRule"/>
</dbReference>
<dbReference type="GO" id="GO:0005524">
    <property type="term" value="F:ATP binding"/>
    <property type="evidence" value="ECO:0007669"/>
    <property type="project" value="UniProtKB-UniRule"/>
</dbReference>
<dbReference type="GO" id="GO:0006420">
    <property type="term" value="P:arginyl-tRNA aminoacylation"/>
    <property type="evidence" value="ECO:0007669"/>
    <property type="project" value="UniProtKB-UniRule"/>
</dbReference>
<dbReference type="CDD" id="cd00671">
    <property type="entry name" value="ArgRS_core"/>
    <property type="match status" value="1"/>
</dbReference>
<dbReference type="FunFam" id="1.10.730.10:FF:000008">
    <property type="entry name" value="Arginine--tRNA ligase"/>
    <property type="match status" value="1"/>
</dbReference>
<dbReference type="FunFam" id="3.40.50.620:FF:000062">
    <property type="entry name" value="Arginine--tRNA ligase"/>
    <property type="match status" value="1"/>
</dbReference>
<dbReference type="Gene3D" id="3.30.1360.70">
    <property type="entry name" value="Arginyl tRNA synthetase N-terminal domain"/>
    <property type="match status" value="1"/>
</dbReference>
<dbReference type="Gene3D" id="3.40.50.620">
    <property type="entry name" value="HUPs"/>
    <property type="match status" value="1"/>
</dbReference>
<dbReference type="Gene3D" id="1.10.730.10">
    <property type="entry name" value="Isoleucyl-tRNA Synthetase, Domain 1"/>
    <property type="match status" value="1"/>
</dbReference>
<dbReference type="HAMAP" id="MF_00123">
    <property type="entry name" value="Arg_tRNA_synth"/>
    <property type="match status" value="1"/>
</dbReference>
<dbReference type="InterPro" id="IPR001278">
    <property type="entry name" value="Arg-tRNA-ligase"/>
</dbReference>
<dbReference type="InterPro" id="IPR005148">
    <property type="entry name" value="Arg-tRNA-synth_N"/>
</dbReference>
<dbReference type="InterPro" id="IPR036695">
    <property type="entry name" value="Arg-tRNA-synth_N_sf"/>
</dbReference>
<dbReference type="InterPro" id="IPR035684">
    <property type="entry name" value="ArgRS_core"/>
</dbReference>
<dbReference type="InterPro" id="IPR008909">
    <property type="entry name" value="DALR_anticod-bd"/>
</dbReference>
<dbReference type="InterPro" id="IPR014729">
    <property type="entry name" value="Rossmann-like_a/b/a_fold"/>
</dbReference>
<dbReference type="InterPro" id="IPR009080">
    <property type="entry name" value="tRNAsynth_Ia_anticodon-bd"/>
</dbReference>
<dbReference type="NCBIfam" id="TIGR00456">
    <property type="entry name" value="argS"/>
    <property type="match status" value="1"/>
</dbReference>
<dbReference type="PANTHER" id="PTHR11956:SF5">
    <property type="entry name" value="ARGININE--TRNA LIGASE, CYTOPLASMIC"/>
    <property type="match status" value="1"/>
</dbReference>
<dbReference type="PANTHER" id="PTHR11956">
    <property type="entry name" value="ARGINYL-TRNA SYNTHETASE"/>
    <property type="match status" value="1"/>
</dbReference>
<dbReference type="Pfam" id="PF03485">
    <property type="entry name" value="Arg_tRNA_synt_N"/>
    <property type="match status" value="1"/>
</dbReference>
<dbReference type="Pfam" id="PF05746">
    <property type="entry name" value="DALR_1"/>
    <property type="match status" value="1"/>
</dbReference>
<dbReference type="Pfam" id="PF00750">
    <property type="entry name" value="tRNA-synt_1d"/>
    <property type="match status" value="1"/>
</dbReference>
<dbReference type="PRINTS" id="PR01038">
    <property type="entry name" value="TRNASYNTHARG"/>
</dbReference>
<dbReference type="SMART" id="SM01016">
    <property type="entry name" value="Arg_tRNA_synt_N"/>
    <property type="match status" value="1"/>
</dbReference>
<dbReference type="SMART" id="SM00836">
    <property type="entry name" value="DALR_1"/>
    <property type="match status" value="1"/>
</dbReference>
<dbReference type="SUPFAM" id="SSF47323">
    <property type="entry name" value="Anticodon-binding domain of a subclass of class I aminoacyl-tRNA synthetases"/>
    <property type="match status" value="1"/>
</dbReference>
<dbReference type="SUPFAM" id="SSF55190">
    <property type="entry name" value="Arginyl-tRNA synthetase (ArgRS), N-terminal 'additional' domain"/>
    <property type="match status" value="1"/>
</dbReference>
<dbReference type="SUPFAM" id="SSF52374">
    <property type="entry name" value="Nucleotidylyl transferase"/>
    <property type="match status" value="1"/>
</dbReference>